<proteinExistence type="evidence at protein level"/>
<feature type="signal peptide" evidence="3">
    <location>
        <begin position="1"/>
        <end position="27"/>
    </location>
</feature>
<feature type="chain" id="PRO_5004328301" description="Neisserial autotransporter lipoprotein NalP" evidence="3">
    <location>
        <begin position="28"/>
        <end position="1082"/>
    </location>
</feature>
<feature type="chain" id="PRO_0000456896" description="NalP passenger domain" evidence="1 16">
    <location>
        <begin position="65"/>
        <end position="815"/>
    </location>
</feature>
<feature type="chain" id="PRO_0000456897" description="NalP translocator" evidence="1 16">
    <location>
        <begin position="816"/>
        <end position="1082"/>
    </location>
</feature>
<feature type="domain" description="Peptidase S8" evidence="5">
    <location>
        <begin position="110"/>
        <end position="482"/>
    </location>
</feature>
<feature type="domain" description="Autotransporter" evidence="4">
    <location>
        <begin position="808"/>
        <end position="1082"/>
    </location>
</feature>
<feature type="active site" description="Charge relay system" evidence="5">
    <location>
        <position position="138"/>
    </location>
</feature>
<feature type="active site" description="Charge relay system" evidence="5">
    <location>
        <position position="210"/>
    </location>
</feature>
<feature type="active site" description="Charge relay system" evidence="5 6 8 9">
    <location>
        <position position="426"/>
    </location>
</feature>
<feature type="lipid moiety-binding region" description="N-palmitoyl cysteine" evidence="1 3">
    <location>
        <position position="28"/>
    </location>
</feature>
<feature type="lipid moiety-binding region" description="S-diacylglycerol cysteine" evidence="3">
    <location>
        <position position="28"/>
    </location>
</feature>
<feature type="mutagenesis site" description="No protein processing seen, protein is not secreted from E.coli. Does not cleave human complement C3 alpha chain in vitro. No change in passenger domain uptake by human cells, but no increase in host cell metabolic activity." evidence="6 8 9">
    <original>S</original>
    <variation>A</variation>
    <location>
        <position position="426"/>
    </location>
</feature>
<protein>
    <recommendedName>
        <fullName evidence="11">Neisserial autotransporter lipoprotein NalP</fullName>
        <shortName evidence="11">Autotransporter NalP</shortName>
        <shortName evidence="11">NalP</shortName>
        <ecNumber evidence="15">3.4.21.-</ecNumber>
    </recommendedName>
    <alternativeName>
        <fullName evidence="10">Autotransporter serine protease A</fullName>
        <shortName evidence="10">AspA</shortName>
    </alternativeName>
    <component>
        <recommendedName>
            <fullName evidence="12">NalP passenger domain</fullName>
        </recommendedName>
    </component>
    <component>
        <recommendedName>
            <fullName evidence="12">NalP translocator</fullName>
        </recommendedName>
    </component>
</protein>
<organism>
    <name type="scientific">Neisseria meningitidis serogroup B (strain ATCC BAA-335 / MC58)</name>
    <dbReference type="NCBI Taxonomy" id="122586"/>
    <lineage>
        <taxon>Bacteria</taxon>
        <taxon>Pseudomonadati</taxon>
        <taxon>Pseudomonadota</taxon>
        <taxon>Betaproteobacteria</taxon>
        <taxon>Neisseriales</taxon>
        <taxon>Neisseriaceae</taxon>
        <taxon>Neisseria</taxon>
    </lineage>
</organism>
<reference evidence="17" key="1">
    <citation type="journal article" date="2000" name="Science">
        <title>Complete genome sequence of Neisseria meningitidis serogroup B strain MC58.</title>
        <authorList>
            <person name="Tettelin H."/>
            <person name="Saunders N.J."/>
            <person name="Heidelberg J.F."/>
            <person name="Jeffries A.C."/>
            <person name="Nelson K.E."/>
            <person name="Eisen J.A."/>
            <person name="Ketchum K.A."/>
            <person name="Hood D.W."/>
            <person name="Peden J.F."/>
            <person name="Dodson R.J."/>
            <person name="Nelson W.C."/>
            <person name="Gwinn M.L."/>
            <person name="DeBoy R.T."/>
            <person name="Peterson J.D."/>
            <person name="Hickey E.K."/>
            <person name="Haft D.H."/>
            <person name="Salzberg S.L."/>
            <person name="White O."/>
            <person name="Fleischmann R.D."/>
            <person name="Dougherty B.A."/>
            <person name="Mason T.M."/>
            <person name="Ciecko A."/>
            <person name="Parksey D.S."/>
            <person name="Blair E."/>
            <person name="Cittone H."/>
            <person name="Clark E.B."/>
            <person name="Cotton M.D."/>
            <person name="Utterback T.R."/>
            <person name="Khouri H.M."/>
            <person name="Qin H."/>
            <person name="Vamathevan J.J."/>
            <person name="Gill J."/>
            <person name="Scarlato V."/>
            <person name="Masignani V."/>
            <person name="Pizza M."/>
            <person name="Grandi G."/>
            <person name="Sun L."/>
            <person name="Smith H.O."/>
            <person name="Fraser C.M."/>
            <person name="Moxon E.R."/>
            <person name="Rappuoli R."/>
            <person name="Venter J.C."/>
        </authorList>
    </citation>
    <scope>NUCLEOTIDE SEQUENCE [LARGE SCALE GENOMIC DNA]</scope>
    <source>
        <strain>ATCC BAA-335 / MC58</strain>
    </source>
</reference>
<reference key="2">
    <citation type="journal article" date="2000" name="Mol. Microbiol.">
        <title>Repeat-associated phase variable genes in the complete genome sequence of Neisseria meningitidis strain MC58.</title>
        <authorList>
            <person name="Saunders N.J."/>
            <person name="Jeffries A.C."/>
            <person name="Peden J.F."/>
            <person name="Hood D.W."/>
            <person name="Tettelin H."/>
            <person name="Rappuoli R."/>
            <person name="Moxon E.R."/>
        </authorList>
    </citation>
    <scope>PROBABLE PHASE VARIABILITY</scope>
    <source>
        <strain>ATCC BAA-335 / MC58</strain>
    </source>
</reference>
<reference key="3">
    <citation type="journal article" date="2002" name="Infect. Immun.">
        <title>Autotransported serine protease A of Neisseria meningitidis: an immunogenic, surface-exposed outer membrane, and secreted protein.</title>
        <authorList>
            <person name="Turner D.P."/>
            <person name="Wooldridge K.G."/>
            <person name="Ala'Aldeen D.A."/>
        </authorList>
    </citation>
    <scope>ANTIGENIC</scope>
    <scope>SUBCELLULAR LOCATION</scope>
    <scope>PROBABLE AUTOPROCESSING</scope>
    <scope>EXPRESSION IN E.COLI</scope>
    <scope>MUTAGENESIS OF SER-426</scope>
    <scope>PROBABLE PHASE VARIABILITY</scope>
    <source>
        <strain>ATCC BAA-335 / MC58</strain>
    </source>
</reference>
<reference key="4">
    <citation type="journal article" date="2010" name="Proc. Natl. Acad. Sci. U.S.A.">
        <title>Neisseria meningitidis GNA2132, a heparin-binding protein that induces protective immunity in humans.</title>
        <authorList>
            <person name="Serruto D."/>
            <person name="Spadafina T."/>
            <person name="Ciucchi L."/>
            <person name="Lewis L.A."/>
            <person name="Ram S."/>
            <person name="Tontini M."/>
            <person name="Santini L."/>
            <person name="Biolchi A."/>
            <person name="Seib K.L."/>
            <person name="Giuliani M.M."/>
            <person name="Donnelly J.J."/>
            <person name="Berti F."/>
            <person name="Savino S."/>
            <person name="Scarselli M."/>
            <person name="Costantino P."/>
            <person name="Kroll J.S."/>
            <person name="O'Dwyer C."/>
            <person name="Qiu J."/>
            <person name="Plaut A.G."/>
            <person name="Moxon R."/>
            <person name="Rappuoli R."/>
            <person name="Pizza M."/>
            <person name="Arico B."/>
        </authorList>
    </citation>
    <scope>FUNCTION</scope>
    <scope>DISRUPTION PHENOTYPE</scope>
    <source>
        <strain>ATCC BAA-335 / MC58</strain>
    </source>
</reference>
<reference key="5">
    <citation type="journal article" date="2014" name="Proc. Natl. Acad. Sci. U.S.A.">
        <title>Neisseria meningitidis NalP cleaves human complement C3, facilitating degradation of C3b and survival in human serum.</title>
        <authorList>
            <person name="Del Tordello E."/>
            <person name="Vacca I."/>
            <person name="Ram S."/>
            <person name="Rappuoli R."/>
            <person name="Serruto D."/>
        </authorList>
    </citation>
    <scope>FUNCTION IN HUMAN COMPLEMENT CLEAVAGE</scope>
    <scope>ACTIVITY REGULATION</scope>
    <scope>SUBCELLULAR LOCATION</scope>
    <scope>DISRUPTION PHENOTYPE</scope>
    <scope>MUTAGENESIS OF SER-426</scope>
    <source>
        <strain>ATCC BAA-335 / MC58</strain>
    </source>
</reference>
<reference key="6">
    <citation type="journal article" date="2018" name="Microb. Pathog.">
        <title>Uptake of Neisserial autotransporter lipoprotein (NalP) promotes an increase in human brain microvascular endothelial cell metabolic activity.</title>
        <authorList>
            <person name="Dufailu O.A."/>
            <person name="Mahdavi J."/>
            <person name="Ala'Aldeen D.A.A."/>
            <person name="Wooldridge K.G."/>
            <person name="Oldfield N.J."/>
        </authorList>
    </citation>
    <scope>FUNCTION</scope>
    <scope>PROBABLE HOST SUBCELLULAR LOCATION</scope>
    <scope>MUTAGENESIS OF SER-426</scope>
    <source>
        <strain>ATCC BAA-335 / MC58</strain>
    </source>
</reference>
<comment type="function">
    <text evidence="1 6 8 9 15 16">Major human immunogenic protein, detected in patients recovering from meningitidis (PubMed:12117956). Autotransporter with a secreted protease domain involved in processing other autotransporter proteins including App, IgA, LbpB and NHBA (By similarity). Probably autoprocesses to release the about 70 kDa passenger domain (Probable) (PubMed:12117956, PubMed:24367091). Both cell surface protein (Neisserial autotransporter lipoprotein NalP) and the passenger domain cleave human (host) complement factor C3, generating a shorter alpha chain and a longer beta chain than normal (PubMed:24367091, PubMed:30081080). Uptake of a passenger domain fragment (residues 101-784) by human cells increases cell metabolic activity; the serine protease activity is required for this increase (PubMed:30081080).</text>
</comment>
<comment type="function">
    <molecule>NalP passenger domain</molecule>
    <text evidence="8">Cleaves human (host) complement factor C3, generating a shorter alpha chain and a longer beta chain than normal. Does not act on mouse or rabbit C3. Cleavage causes C3b degradation by human CFI and CFH, and thus decreases deposition of C3b on the bacteria surface and probably facilitates complement escape.</text>
</comment>
<comment type="function">
    <text evidence="1">Plays a role in extracellular-DNA (eDNA) mediated biofilm formation. In some strains (including cc32 strain MC58) eDNA stimulates biofilm formation. When NalP is not expressed (and no longer processes NHBA or IgA) biofilm formation increases.</text>
</comment>
<comment type="activity regulation">
    <molecule>NalP passenger domain</molecule>
    <text evidence="8">Cleavage of host complement factor C3 is inhibited by PMSF.</text>
</comment>
<comment type="subcellular location">
    <molecule>Neisserial autotransporter lipoprotein NalP</molecule>
    <subcellularLocation>
        <location evidence="6">Cell outer membrane</location>
        <topology evidence="3">Lipid-anchor</topology>
    </subcellularLocation>
    <subcellularLocation>
        <location evidence="6">Cell surface</location>
    </subcellularLocation>
    <text evidence="6">The 112 kDa precursor is associated with the cell outer membrane, the passenger domain is secreted.</text>
</comment>
<comment type="subcellular location">
    <molecule>NalP passenger domain</molecule>
    <subcellularLocation>
        <location evidence="6 8">Secreted</location>
    </subcellularLocation>
    <subcellularLocation>
        <location evidence="9">Host cytoplasm</location>
        <location evidence="9">Host perinuclear region</location>
    </subcellularLocation>
    <text evidence="6 8 9">The 68-70 kDa passenger form is secreted (PubMed:12117956, PubMed:24367091). A fragment of the passenger domain (residues 101-784) is taken up by human brain microvascular endothelial cells as well as some other cells (PubMed:30081080).</text>
</comment>
<comment type="subcellular location">
    <molecule>NalP translocator</molecule>
    <subcellularLocation>
        <location evidence="13">Cell outer membrane</location>
    </subcellularLocation>
    <text evidence="16">An approximately 30 kDa form is detected in whole cells; this is probably the beta-barrel translocation domain integrated in the outer membrane.</text>
</comment>
<comment type="domain">
    <text evidence="2 15">The signal peptide, cleaved at the inner membrane, guides the autotransporter protein to the periplasmic space. Insertion of the C-terminal translocator domain in the outer membrane forms a hydrophilic pore for the translocation of the passenger domain to the bacterial cell surface, with subsequent lipid-anchoring to the cell outer membrane and eventual release of the passenger domain.</text>
</comment>
<comment type="domain">
    <text evidence="1">The translocator domain forms a 12-stranded beta-barrel with a 10 X 12.5 Angstrom channel.</text>
</comment>
<comment type="PTM">
    <text evidence="8 15">Probably auto-processes to yield a 68-70 kDa form and a C-terminal 30 kDa translocator domain; upon overexpression in situ and in E.coli full-length protein is seen as well as (probably) auto-processed forms of 68-70 kDa and 30 kDa in size, suggesting this may have protease activity.</text>
</comment>
<comment type="disruption phenotype">
    <text evidence="7 8">No longer processes NHBA (PubMed:20133713). Bacteria are more susceptible to killing in human serum and human whole blood, human complement factor C3 is no longer cleaved, increased C3b deposition on bacteria (PubMed:24367091).</text>
</comment>
<comment type="miscellaneous">
    <text evidence="14 15">Probably a phase variable gene because of slipped-strand mispairing of a polycytidine tract in the coding sequence.</text>
</comment>
<comment type="similarity">
    <text evidence="5">Belongs to the peptidase S8 family.</text>
</comment>
<keyword id="KW-0068">Autocatalytic cleavage</keyword>
<keyword id="KW-0998">Cell outer membrane</keyword>
<keyword id="KW-1035">Host cytoplasm</keyword>
<keyword id="KW-0378">Hydrolase</keyword>
<keyword id="KW-0449">Lipoprotein</keyword>
<keyword id="KW-0472">Membrane</keyword>
<keyword id="KW-0564">Palmitate</keyword>
<keyword id="KW-0645">Protease</keyword>
<keyword id="KW-1185">Reference proteome</keyword>
<keyword id="KW-0964">Secreted</keyword>
<keyword id="KW-0720">Serine protease</keyword>
<keyword id="KW-0732">Signal</keyword>
<keyword id="KW-0843">Virulence</keyword>
<dbReference type="EC" id="3.4.21.-" evidence="15"/>
<dbReference type="EMBL" id="AE002098">
    <property type="protein sequence ID" value="AAF42298.1"/>
    <property type="molecule type" value="Genomic_DNA"/>
</dbReference>
<dbReference type="PIR" id="H81020">
    <property type="entry name" value="H81020"/>
</dbReference>
<dbReference type="RefSeq" id="NP_274963.1">
    <property type="nucleotide sequence ID" value="NC_003112.2"/>
</dbReference>
<dbReference type="RefSeq" id="WP_010981014.1">
    <property type="nucleotide sequence ID" value="NC_003112.2"/>
</dbReference>
<dbReference type="SMR" id="Q9JXM7"/>
<dbReference type="MEROPS" id="S08.160"/>
<dbReference type="PaxDb" id="122586-NMB1969"/>
<dbReference type="KEGG" id="nme:NMB1969"/>
<dbReference type="PATRIC" id="fig|122586.8.peg.2506"/>
<dbReference type="HOGENOM" id="CLU_005887_0_0_4"/>
<dbReference type="InParanoid" id="Q9JXM7"/>
<dbReference type="OrthoDB" id="5760545at2"/>
<dbReference type="Proteomes" id="UP000000425">
    <property type="component" value="Chromosome"/>
</dbReference>
<dbReference type="GO" id="GO:0009279">
    <property type="term" value="C:cell outer membrane"/>
    <property type="evidence" value="ECO:0007669"/>
    <property type="project" value="UniProtKB-SubCell"/>
</dbReference>
<dbReference type="GO" id="GO:0009986">
    <property type="term" value="C:cell surface"/>
    <property type="evidence" value="ECO:0007669"/>
    <property type="project" value="UniProtKB-SubCell"/>
</dbReference>
<dbReference type="GO" id="GO:0005576">
    <property type="term" value="C:extracellular region"/>
    <property type="evidence" value="ECO:0007669"/>
    <property type="project" value="UniProtKB-SubCell"/>
</dbReference>
<dbReference type="GO" id="GO:0044220">
    <property type="term" value="C:host cell perinuclear region of cytoplasm"/>
    <property type="evidence" value="ECO:0007669"/>
    <property type="project" value="UniProtKB-SubCell"/>
</dbReference>
<dbReference type="GO" id="GO:0005886">
    <property type="term" value="C:plasma membrane"/>
    <property type="evidence" value="ECO:0000318"/>
    <property type="project" value="GO_Central"/>
</dbReference>
<dbReference type="GO" id="GO:0004252">
    <property type="term" value="F:serine-type endopeptidase activity"/>
    <property type="evidence" value="ECO:0000318"/>
    <property type="project" value="GO_Central"/>
</dbReference>
<dbReference type="GO" id="GO:0016485">
    <property type="term" value="P:protein processing"/>
    <property type="evidence" value="ECO:0000318"/>
    <property type="project" value="GO_Central"/>
</dbReference>
<dbReference type="CDD" id="cd04848">
    <property type="entry name" value="Peptidases_S8_Autotransporter_serine_protease_like"/>
    <property type="match status" value="1"/>
</dbReference>
<dbReference type="Gene3D" id="2.40.128.130">
    <property type="entry name" value="Autotransporter beta-domain"/>
    <property type="match status" value="1"/>
</dbReference>
<dbReference type="Gene3D" id="3.40.50.200">
    <property type="entry name" value="Peptidase S8/S53 domain"/>
    <property type="match status" value="1"/>
</dbReference>
<dbReference type="InterPro" id="IPR005546">
    <property type="entry name" value="Autotransporte_beta"/>
</dbReference>
<dbReference type="InterPro" id="IPR036709">
    <property type="entry name" value="Autotransporte_beta_dom_sf"/>
</dbReference>
<dbReference type="InterPro" id="IPR013425">
    <property type="entry name" value="Autotrns_rpt"/>
</dbReference>
<dbReference type="InterPro" id="IPR000209">
    <property type="entry name" value="Peptidase_S8/S53_dom"/>
</dbReference>
<dbReference type="InterPro" id="IPR036852">
    <property type="entry name" value="Peptidase_S8/S53_dom_sf"/>
</dbReference>
<dbReference type="InterPro" id="IPR023828">
    <property type="entry name" value="Peptidase_S8_Ser-AS"/>
</dbReference>
<dbReference type="InterPro" id="IPR015500">
    <property type="entry name" value="Peptidase_S8_subtilisin-rel"/>
</dbReference>
<dbReference type="InterPro" id="IPR034061">
    <property type="entry name" value="Peptidases_S8_Autotransporter"/>
</dbReference>
<dbReference type="NCBIfam" id="TIGR02601">
    <property type="entry name" value="autotrns_rpt"/>
    <property type="match status" value="1"/>
</dbReference>
<dbReference type="PANTHER" id="PTHR42884:SF14">
    <property type="entry name" value="NEUROENDOCRINE CONVERTASE 1"/>
    <property type="match status" value="1"/>
</dbReference>
<dbReference type="PANTHER" id="PTHR42884">
    <property type="entry name" value="PROPROTEIN CONVERTASE SUBTILISIN/KEXIN-RELATED"/>
    <property type="match status" value="1"/>
</dbReference>
<dbReference type="Pfam" id="PF03797">
    <property type="entry name" value="Autotransporter"/>
    <property type="match status" value="1"/>
</dbReference>
<dbReference type="Pfam" id="PF12951">
    <property type="entry name" value="PATR"/>
    <property type="match status" value="1"/>
</dbReference>
<dbReference type="Pfam" id="PF00082">
    <property type="entry name" value="Peptidase_S8"/>
    <property type="match status" value="1"/>
</dbReference>
<dbReference type="PRINTS" id="PR00723">
    <property type="entry name" value="SUBTILISIN"/>
</dbReference>
<dbReference type="SMART" id="SM00869">
    <property type="entry name" value="Autotransporter"/>
    <property type="match status" value="1"/>
</dbReference>
<dbReference type="SUPFAM" id="SSF103515">
    <property type="entry name" value="Autotransporter"/>
    <property type="match status" value="1"/>
</dbReference>
<dbReference type="SUPFAM" id="SSF52743">
    <property type="entry name" value="Subtilisin-like"/>
    <property type="match status" value="1"/>
</dbReference>
<dbReference type="PROSITE" id="PS51208">
    <property type="entry name" value="AUTOTRANSPORTER"/>
    <property type="match status" value="1"/>
</dbReference>
<dbReference type="PROSITE" id="PS51257">
    <property type="entry name" value="PROKAR_LIPOPROTEIN"/>
    <property type="match status" value="1"/>
</dbReference>
<dbReference type="PROSITE" id="PS51892">
    <property type="entry name" value="SUBTILASE"/>
    <property type="match status" value="1"/>
</dbReference>
<dbReference type="PROSITE" id="PS00138">
    <property type="entry name" value="SUBTILASE_SER"/>
    <property type="match status" value="1"/>
</dbReference>
<evidence type="ECO:0000250" key="1">
    <source>
        <dbReference type="UniProtKB" id="E6MVD9"/>
    </source>
</evidence>
<evidence type="ECO:0000250" key="2">
    <source>
        <dbReference type="UniProtKB" id="P09790"/>
    </source>
</evidence>
<evidence type="ECO:0000255" key="3">
    <source>
        <dbReference type="PROSITE-ProRule" id="PRU00303"/>
    </source>
</evidence>
<evidence type="ECO:0000255" key="4">
    <source>
        <dbReference type="PROSITE-ProRule" id="PRU00556"/>
    </source>
</evidence>
<evidence type="ECO:0000255" key="5">
    <source>
        <dbReference type="PROSITE-ProRule" id="PRU01240"/>
    </source>
</evidence>
<evidence type="ECO:0000269" key="6">
    <source>
    </source>
</evidence>
<evidence type="ECO:0000269" key="7">
    <source>
    </source>
</evidence>
<evidence type="ECO:0000269" key="8">
    <source>
    </source>
</evidence>
<evidence type="ECO:0000269" key="9">
    <source>
    </source>
</evidence>
<evidence type="ECO:0000303" key="10">
    <source>
    </source>
</evidence>
<evidence type="ECO:0000303" key="11">
    <source>
    </source>
</evidence>
<evidence type="ECO:0000303" key="12">
    <source>
    </source>
</evidence>
<evidence type="ECO:0000305" key="13"/>
<evidence type="ECO:0000305" key="14">
    <source>
    </source>
</evidence>
<evidence type="ECO:0000305" key="15">
    <source>
    </source>
</evidence>
<evidence type="ECO:0000305" key="16">
    <source>
    </source>
</evidence>
<evidence type="ECO:0000312" key="17">
    <source>
        <dbReference type="EMBL" id="AAF42298.1"/>
    </source>
</evidence>
<sequence>MRTTPTFPTKTFKPTAMALAVATTLSACLGGGGGGTSAPDFNAGGTGIGSNSRATTAKSAAVSYAGIKNEMCKDRSMLCAGRDDVAVTDRDAKINAPPPNLHTGDFPNPNDAYKNLINLKPAIEAGYTGRGVEVGIVDTGESVGSISFPELYGRKEHGYNENYKNYTAYMRKEAPEDGGGKDIEASFDDEAVIETEAKPTDIRHVKEIGHIDLVSHIIGGRSVDGRPAGGIAPDATLHIMNTNDETKNEMMVAAIRNAWVKLGERGVRIVNNSFGTTSRAGTADLFQIANSEEQYRQALLDYSGGDKTDEGIRLMQQSDYGNLSYHIRNKNMLFIFSTGNDAQAQPNTYALLPFYEKDAQKGIITVAGVDRSGEKFKREMYGEPGTEPLEYGSNHCGITAMWCLSAPYEASVRFTRTNPIQIAGTSFSAPIVTGTAALLLQKYPWMSNDNLRTTLLTTAQDIGAVGVDSKFGWGLLDAGKAMNGPASFPFGDFTADTKGTSDIAYSFRNDISGTGGLIKKGGSQLQLHGNNTYTGKTIIEGGSLVLYGNNKSDMRVETKGALIYNGAASGGSLNSDGIVYLADTDQSGANETVHIKGSLQLDGKGTLYTRLGKLLKVDGTAIIGGKLYMSARGKGAGYLNSTGRRVPFLSAAKIGQDYSFFTNIETDGGLLASLDSVEKTAGSEGDTLSYYVRRGNAARTASAAAHSAPAGLKHAVEQGGSNLENLMVELDASESSATPETVETAAADRTDMPGIRPYGATFRAAAAVQHANAADGVRIFNSLAATVYADSTAAHADMQGRRLKAVSDGLDHNGTGLRVIAQTQQDGGTWEQGGVEGKMRGSTQTVGIAAKTGENTTAAATLGMGRSTWSENSANAKTDSISLFAGIRHDAGDIGYLKGLFSYGRYKNSISRSTGADEHAEGSVNGTLMQLGALGGVNVPFAATGDLTVEGGLRYDLLKQDAFAEKGSALGWSGNSLTEGTLVGLAGLKLSQPLSDKAVLFATAGVERDLNGRDYTVTGGFTGATAATGKTGARNMPHTRLVAGLGADVEFGNGWNGLARYSYAGSKQYGNHSGRVGVGYRF</sequence>
<name>NALP_NEIMB</name>
<gene>
    <name evidence="11" type="primary">nalP</name>
    <name evidence="10" type="synonym">aspA</name>
    <name evidence="17" type="ordered locus">NMB1969</name>
</gene>
<accession>Q9JXM7</accession>